<proteinExistence type="inferred from homology"/>
<reference key="1">
    <citation type="journal article" date="2002" name="Nature">
        <title>Comparison of the genomes of two Xanthomonas pathogens with differing host specificities.</title>
        <authorList>
            <person name="da Silva A.C.R."/>
            <person name="Ferro J.A."/>
            <person name="Reinach F.C."/>
            <person name="Farah C.S."/>
            <person name="Furlan L.R."/>
            <person name="Quaggio R.B."/>
            <person name="Monteiro-Vitorello C.B."/>
            <person name="Van Sluys M.A."/>
            <person name="Almeida N.F. Jr."/>
            <person name="Alves L.M.C."/>
            <person name="do Amaral A.M."/>
            <person name="Bertolini M.C."/>
            <person name="Camargo L.E.A."/>
            <person name="Camarotte G."/>
            <person name="Cannavan F."/>
            <person name="Cardozo J."/>
            <person name="Chambergo F."/>
            <person name="Ciapina L.P."/>
            <person name="Cicarelli R.M.B."/>
            <person name="Coutinho L.L."/>
            <person name="Cursino-Santos J.R."/>
            <person name="El-Dorry H."/>
            <person name="Faria J.B."/>
            <person name="Ferreira A.J.S."/>
            <person name="Ferreira R.C.C."/>
            <person name="Ferro M.I.T."/>
            <person name="Formighieri E.F."/>
            <person name="Franco M.C."/>
            <person name="Greggio C.C."/>
            <person name="Gruber A."/>
            <person name="Katsuyama A.M."/>
            <person name="Kishi L.T."/>
            <person name="Leite R.P."/>
            <person name="Lemos E.G.M."/>
            <person name="Lemos M.V.F."/>
            <person name="Locali E.C."/>
            <person name="Machado M.A."/>
            <person name="Madeira A.M.B.N."/>
            <person name="Martinez-Rossi N.M."/>
            <person name="Martins E.C."/>
            <person name="Meidanis J."/>
            <person name="Menck C.F.M."/>
            <person name="Miyaki C.Y."/>
            <person name="Moon D.H."/>
            <person name="Moreira L.M."/>
            <person name="Novo M.T.M."/>
            <person name="Okura V.K."/>
            <person name="Oliveira M.C."/>
            <person name="Oliveira V.R."/>
            <person name="Pereira H.A."/>
            <person name="Rossi A."/>
            <person name="Sena J.A.D."/>
            <person name="Silva C."/>
            <person name="de Souza R.F."/>
            <person name="Spinola L.A.F."/>
            <person name="Takita M.A."/>
            <person name="Tamura R.E."/>
            <person name="Teixeira E.C."/>
            <person name="Tezza R.I.D."/>
            <person name="Trindade dos Santos M."/>
            <person name="Truffi D."/>
            <person name="Tsai S.M."/>
            <person name="White F.F."/>
            <person name="Setubal J.C."/>
            <person name="Kitajima J.P."/>
        </authorList>
    </citation>
    <scope>NUCLEOTIDE SEQUENCE [LARGE SCALE GENOMIC DNA]</scope>
    <source>
        <strain>306</strain>
    </source>
</reference>
<dbReference type="EMBL" id="AE008923">
    <property type="protein sequence ID" value="AAM39053.1"/>
    <property type="molecule type" value="Genomic_DNA"/>
</dbReference>
<dbReference type="RefSeq" id="WP_003484969.1">
    <property type="nucleotide sequence ID" value="NC_003919.1"/>
</dbReference>
<dbReference type="SMR" id="Q8PEX2"/>
<dbReference type="GeneID" id="97512359"/>
<dbReference type="KEGG" id="xac:XAC4218"/>
<dbReference type="eggNOG" id="COG1826">
    <property type="taxonomic scope" value="Bacteria"/>
</dbReference>
<dbReference type="HOGENOM" id="CLU_086034_5_3_6"/>
<dbReference type="Proteomes" id="UP000000576">
    <property type="component" value="Chromosome"/>
</dbReference>
<dbReference type="GO" id="GO:0033281">
    <property type="term" value="C:TAT protein transport complex"/>
    <property type="evidence" value="ECO:0007669"/>
    <property type="project" value="UniProtKB-UniRule"/>
</dbReference>
<dbReference type="GO" id="GO:0008320">
    <property type="term" value="F:protein transmembrane transporter activity"/>
    <property type="evidence" value="ECO:0007669"/>
    <property type="project" value="UniProtKB-UniRule"/>
</dbReference>
<dbReference type="GO" id="GO:0043953">
    <property type="term" value="P:protein transport by the Tat complex"/>
    <property type="evidence" value="ECO:0007669"/>
    <property type="project" value="UniProtKB-UniRule"/>
</dbReference>
<dbReference type="Gene3D" id="1.20.5.3310">
    <property type="match status" value="1"/>
</dbReference>
<dbReference type="HAMAP" id="MF_00236">
    <property type="entry name" value="TatA_E"/>
    <property type="match status" value="1"/>
</dbReference>
<dbReference type="InterPro" id="IPR003369">
    <property type="entry name" value="TatA/B/E"/>
</dbReference>
<dbReference type="InterPro" id="IPR006312">
    <property type="entry name" value="TatA/E"/>
</dbReference>
<dbReference type="NCBIfam" id="NF002813">
    <property type="entry name" value="PRK02958.1"/>
    <property type="match status" value="1"/>
</dbReference>
<dbReference type="NCBIfam" id="NF003393">
    <property type="entry name" value="PRK04561.1"/>
    <property type="match status" value="1"/>
</dbReference>
<dbReference type="NCBIfam" id="TIGR01411">
    <property type="entry name" value="tatAE"/>
    <property type="match status" value="1"/>
</dbReference>
<dbReference type="PANTHER" id="PTHR42982">
    <property type="entry name" value="SEC-INDEPENDENT PROTEIN TRANSLOCASE PROTEIN TATA"/>
    <property type="match status" value="1"/>
</dbReference>
<dbReference type="PANTHER" id="PTHR42982:SF1">
    <property type="entry name" value="SEC-INDEPENDENT PROTEIN TRANSLOCASE PROTEIN TATA"/>
    <property type="match status" value="1"/>
</dbReference>
<dbReference type="Pfam" id="PF02416">
    <property type="entry name" value="TatA_B_E"/>
    <property type="match status" value="1"/>
</dbReference>
<keyword id="KW-0997">Cell inner membrane</keyword>
<keyword id="KW-1003">Cell membrane</keyword>
<keyword id="KW-0472">Membrane</keyword>
<keyword id="KW-0653">Protein transport</keyword>
<keyword id="KW-0811">Translocation</keyword>
<keyword id="KW-0812">Transmembrane</keyword>
<keyword id="KW-1133">Transmembrane helix</keyword>
<keyword id="KW-0813">Transport</keyword>
<name>TATA_XANAC</name>
<gene>
    <name evidence="1" type="primary">tatA</name>
    <name type="ordered locus">XAC4218</name>
</gene>
<organism>
    <name type="scientific">Xanthomonas axonopodis pv. citri (strain 306)</name>
    <dbReference type="NCBI Taxonomy" id="190486"/>
    <lineage>
        <taxon>Bacteria</taxon>
        <taxon>Pseudomonadati</taxon>
        <taxon>Pseudomonadota</taxon>
        <taxon>Gammaproteobacteria</taxon>
        <taxon>Lysobacterales</taxon>
        <taxon>Lysobacteraceae</taxon>
        <taxon>Xanthomonas</taxon>
    </lineage>
</organism>
<evidence type="ECO:0000255" key="1">
    <source>
        <dbReference type="HAMAP-Rule" id="MF_00236"/>
    </source>
</evidence>
<evidence type="ECO:0000256" key="2">
    <source>
        <dbReference type="SAM" id="MobiDB-lite"/>
    </source>
</evidence>
<comment type="function">
    <text evidence="1">Part of the twin-arginine translocation (Tat) system that transports large folded proteins containing a characteristic twin-arginine motif in their signal peptide across membranes. TatA could form the protein-conducting channel of the Tat system.</text>
</comment>
<comment type="subunit">
    <text evidence="1">The Tat system comprises two distinct complexes: a TatABC complex, containing multiple copies of TatA, TatB and TatC subunits, and a separate TatA complex, containing only TatA subunits. Substrates initially bind to the TatABC complex, which probably triggers association of the separate TatA complex to form the active translocon.</text>
</comment>
<comment type="subcellular location">
    <subcellularLocation>
        <location evidence="1">Cell inner membrane</location>
        <topology evidence="1">Single-pass membrane protein</topology>
    </subcellularLocation>
</comment>
<comment type="similarity">
    <text evidence="1">Belongs to the TatA/E family.</text>
</comment>
<feature type="chain" id="PRO_0000097966" description="Sec-independent protein translocase protein TatA">
    <location>
        <begin position="1"/>
        <end position="75"/>
    </location>
</feature>
<feature type="transmembrane region" description="Helical" evidence="1">
    <location>
        <begin position="1"/>
        <end position="21"/>
    </location>
</feature>
<feature type="region of interest" description="Disordered" evidence="2">
    <location>
        <begin position="41"/>
        <end position="75"/>
    </location>
</feature>
<sequence>MGGFSIWHWLIVLVIVLLVFGTKRLTSGAKDLGSAVKEFKKGMHDDDKPAGKLGDDSRTAEQAREAQAERDRDAR</sequence>
<accession>Q8PEX2</accession>
<protein>
    <recommendedName>
        <fullName evidence="1">Sec-independent protein translocase protein TatA</fullName>
    </recommendedName>
</protein>